<protein>
    <recommendedName>
        <fullName>Phosphoribulokinase, chloroplastic</fullName>
        <shortName>PRK</shortName>
        <shortName>PRKase</shortName>
        <ecNumber>2.7.1.19</ecNumber>
    </recommendedName>
    <alternativeName>
        <fullName>Phosphopentokinase</fullName>
    </alternativeName>
</protein>
<name>KPPR_WHEAT</name>
<dbReference type="EC" id="2.7.1.19"/>
<dbReference type="EMBL" id="X51608">
    <property type="protein sequence ID" value="CAB56544.1"/>
    <property type="molecule type" value="mRNA"/>
</dbReference>
<dbReference type="EMBL" id="X57952">
    <property type="protein sequence ID" value="CAA41020.1"/>
    <property type="molecule type" value="Genomic_DNA"/>
</dbReference>
<dbReference type="PIR" id="S16585">
    <property type="entry name" value="S16585"/>
</dbReference>
<dbReference type="RefSeq" id="NP_001392682.1">
    <property type="nucleotide sequence ID" value="NM_001405753.1"/>
</dbReference>
<dbReference type="SMR" id="P26302"/>
<dbReference type="STRING" id="4565.P26302"/>
<dbReference type="PaxDb" id="4565-Traes_6DL_22C536081.1"/>
<dbReference type="EnsemblPlants" id="TraesARI6D03G03714430.1">
    <property type="protein sequence ID" value="TraesARI6D03G03714430.1"/>
    <property type="gene ID" value="TraesARI6D03G03714430"/>
</dbReference>
<dbReference type="EnsemblPlants" id="TraesCS6D02G247400.1">
    <property type="protein sequence ID" value="TraesCS6D02G247400.1"/>
    <property type="gene ID" value="TraesCS6D02G247400"/>
</dbReference>
<dbReference type="EnsemblPlants" id="TraesCS6D03G0599500.1">
    <property type="protein sequence ID" value="TraesCS6D03G0599500.1.CDS"/>
    <property type="gene ID" value="TraesCS6D03G0599500"/>
</dbReference>
<dbReference type="EnsemblPlants" id="TraesJAG6D03G03733120.1">
    <property type="protein sequence ID" value="TraesJAG6D03G03733120.1"/>
    <property type="gene ID" value="TraesJAG6D03G03733120"/>
</dbReference>
<dbReference type="EnsemblPlants" id="TraesJUL6D03G03783060.1">
    <property type="protein sequence ID" value="TraesJUL6D03G03783060.1"/>
    <property type="gene ID" value="TraesJUL6D03G03783060"/>
</dbReference>
<dbReference type="EnsemblPlants" id="TraesKAR6D01G0266980.1">
    <property type="protein sequence ID" value="cds.TraesKAR6D01G0266980.1"/>
    <property type="gene ID" value="TraesKAR6D01G0266980"/>
</dbReference>
<dbReference type="EnsemblPlants" id="TraesLAC6D03G03700830.1">
    <property type="protein sequence ID" value="TraesLAC6D03G03700830.1"/>
    <property type="gene ID" value="TraesLAC6D03G03700830"/>
</dbReference>
<dbReference type="EnsemblPlants" id="TraesLDM6D03G03754060.1">
    <property type="protein sequence ID" value="TraesLDM6D03G03754060.1"/>
    <property type="gene ID" value="TraesLDM6D03G03754060"/>
</dbReference>
<dbReference type="EnsemblPlants" id="TraesMAC6D03G03748240.1">
    <property type="protein sequence ID" value="TraesMAC6D03G03748240.1"/>
    <property type="gene ID" value="TraesMAC6D03G03748240"/>
</dbReference>
<dbReference type="EnsemblPlants" id="TraesNOR6D03G03790830.1">
    <property type="protein sequence ID" value="TraesNOR6D03G03790830.1"/>
    <property type="gene ID" value="TraesNOR6D03G03790830"/>
</dbReference>
<dbReference type="EnsemblPlants" id="TraesPARA_EIv1.0_2155070.1">
    <property type="protein sequence ID" value="TraesPARA_EIv1.0_2155070.1.CDS"/>
    <property type="gene ID" value="TraesPARA_EIv1.0_2155070"/>
</dbReference>
<dbReference type="EnsemblPlants" id="TraesRN6B0100827600.1">
    <property type="protein sequence ID" value="TraesRN6B0100827600.1"/>
    <property type="gene ID" value="TraesRN6B0100827600"/>
</dbReference>
<dbReference type="EnsemblPlants" id="TraesSTA6D03G03743340.1">
    <property type="protein sequence ID" value="TraesSTA6D03G03743340.1"/>
    <property type="gene ID" value="TraesSTA6D03G03743340"/>
</dbReference>
<dbReference type="EnsemblPlants" id="TraesSYM6D03G03697830.1">
    <property type="protein sequence ID" value="TraesSYM6D03G03697830.1"/>
    <property type="gene ID" value="TraesSYM6D03G03697830"/>
</dbReference>
<dbReference type="GeneID" id="543283"/>
<dbReference type="Gramene" id="TraesARI6D03G03714430.1">
    <property type="protein sequence ID" value="TraesARI6D03G03714430.1"/>
    <property type="gene ID" value="TraesARI6D03G03714430"/>
</dbReference>
<dbReference type="Gramene" id="TraesCS6D02G247400.1">
    <property type="protein sequence ID" value="TraesCS6D02G247400.1"/>
    <property type="gene ID" value="TraesCS6D02G247400"/>
</dbReference>
<dbReference type="Gramene" id="TraesCS6D03G0599500.1">
    <property type="protein sequence ID" value="TraesCS6D03G0599500.1.CDS"/>
    <property type="gene ID" value="TraesCS6D03G0599500"/>
</dbReference>
<dbReference type="Gramene" id="TraesJAG6D03G03733120.1">
    <property type="protein sequence ID" value="TraesJAG6D03G03733120.1"/>
    <property type="gene ID" value="TraesJAG6D03G03733120"/>
</dbReference>
<dbReference type="Gramene" id="TraesJUL6D03G03783060.1">
    <property type="protein sequence ID" value="TraesJUL6D03G03783060.1"/>
    <property type="gene ID" value="TraesJUL6D03G03783060"/>
</dbReference>
<dbReference type="Gramene" id="TraesKAR6D01G0266980.1">
    <property type="protein sequence ID" value="cds.TraesKAR6D01G0266980.1"/>
    <property type="gene ID" value="TraesKAR6D01G0266980"/>
</dbReference>
<dbReference type="Gramene" id="TraesLAC6D03G03700830.1">
    <property type="protein sequence ID" value="TraesLAC6D03G03700830.1"/>
    <property type="gene ID" value="TraesLAC6D03G03700830"/>
</dbReference>
<dbReference type="Gramene" id="TraesLDM6D03G03754060.1">
    <property type="protein sequence ID" value="TraesLDM6D03G03754060.1"/>
    <property type="gene ID" value="TraesLDM6D03G03754060"/>
</dbReference>
<dbReference type="Gramene" id="TraesMAC6D03G03748240.1">
    <property type="protein sequence ID" value="TraesMAC6D03G03748240.1"/>
    <property type="gene ID" value="TraesMAC6D03G03748240"/>
</dbReference>
<dbReference type="Gramene" id="TraesNOR6D03G03790830.1">
    <property type="protein sequence ID" value="TraesNOR6D03G03790830.1"/>
    <property type="gene ID" value="TraesNOR6D03G03790830"/>
</dbReference>
<dbReference type="Gramene" id="TraesPARA_EIv1.0_2155070.1">
    <property type="protein sequence ID" value="TraesPARA_EIv1.0_2155070.1.CDS"/>
    <property type="gene ID" value="TraesPARA_EIv1.0_2155070"/>
</dbReference>
<dbReference type="Gramene" id="TraesRN6B0100827600.1">
    <property type="protein sequence ID" value="TraesRN6B0100827600.1"/>
    <property type="gene ID" value="TraesRN6B0100827600"/>
</dbReference>
<dbReference type="Gramene" id="TraesSTA6D03G03743340.1">
    <property type="protein sequence ID" value="TraesSTA6D03G03743340.1"/>
    <property type="gene ID" value="TraesSTA6D03G03743340"/>
</dbReference>
<dbReference type="Gramene" id="TraesSYM6D03G03697830.1">
    <property type="protein sequence ID" value="TraesSYM6D03G03697830.1"/>
    <property type="gene ID" value="TraesSYM6D03G03697830"/>
</dbReference>
<dbReference type="eggNOG" id="KOG4203">
    <property type="taxonomic scope" value="Eukaryota"/>
</dbReference>
<dbReference type="HOGENOM" id="CLU_033590_1_0_1"/>
<dbReference type="OMA" id="GLKMRAT"/>
<dbReference type="UniPathway" id="UPA00116"/>
<dbReference type="Proteomes" id="UP000019116">
    <property type="component" value="Chromosome 6D"/>
</dbReference>
<dbReference type="GO" id="GO:0009507">
    <property type="term" value="C:chloroplast"/>
    <property type="evidence" value="ECO:0007669"/>
    <property type="project" value="UniProtKB-SubCell"/>
</dbReference>
<dbReference type="GO" id="GO:0005737">
    <property type="term" value="C:cytoplasm"/>
    <property type="evidence" value="ECO:0000318"/>
    <property type="project" value="GO_Central"/>
</dbReference>
<dbReference type="GO" id="GO:0005524">
    <property type="term" value="F:ATP binding"/>
    <property type="evidence" value="ECO:0007669"/>
    <property type="project" value="UniProtKB-KW"/>
</dbReference>
<dbReference type="GO" id="GO:0008974">
    <property type="term" value="F:phosphoribulokinase activity"/>
    <property type="evidence" value="ECO:0007669"/>
    <property type="project" value="UniProtKB-EC"/>
</dbReference>
<dbReference type="GO" id="GO:0019253">
    <property type="term" value="P:reductive pentose-phosphate cycle"/>
    <property type="evidence" value="ECO:0007669"/>
    <property type="project" value="UniProtKB-UniPathway"/>
</dbReference>
<dbReference type="CDD" id="cd02026">
    <property type="entry name" value="PRK"/>
    <property type="match status" value="1"/>
</dbReference>
<dbReference type="FunFam" id="3.40.50.300:FF:000619">
    <property type="entry name" value="Phosphoribulokinase"/>
    <property type="match status" value="1"/>
</dbReference>
<dbReference type="Gene3D" id="3.40.50.300">
    <property type="entry name" value="P-loop containing nucleotide triphosphate hydrolases"/>
    <property type="match status" value="1"/>
</dbReference>
<dbReference type="InterPro" id="IPR027417">
    <property type="entry name" value="P-loop_NTPase"/>
</dbReference>
<dbReference type="InterPro" id="IPR006082">
    <property type="entry name" value="PRK"/>
</dbReference>
<dbReference type="InterPro" id="IPR006083">
    <property type="entry name" value="PRK/URK"/>
</dbReference>
<dbReference type="NCBIfam" id="NF005655">
    <property type="entry name" value="PRK07429.1"/>
    <property type="match status" value="1"/>
</dbReference>
<dbReference type="PANTHER" id="PTHR10285">
    <property type="entry name" value="URIDINE KINASE"/>
    <property type="match status" value="1"/>
</dbReference>
<dbReference type="Pfam" id="PF00485">
    <property type="entry name" value="PRK"/>
    <property type="match status" value="1"/>
</dbReference>
<dbReference type="PRINTS" id="PR00478">
    <property type="entry name" value="PHRIBLKINASE"/>
</dbReference>
<dbReference type="SUPFAM" id="SSF52540">
    <property type="entry name" value="P-loop containing nucleoside triphosphate hydrolases"/>
    <property type="match status" value="1"/>
</dbReference>
<dbReference type="PROSITE" id="PS00567">
    <property type="entry name" value="PHOSPHORIBULOKINASE"/>
    <property type="match status" value="1"/>
</dbReference>
<keyword id="KW-0067">ATP-binding</keyword>
<keyword id="KW-0113">Calvin cycle</keyword>
<keyword id="KW-0150">Chloroplast</keyword>
<keyword id="KW-1015">Disulfide bond</keyword>
<keyword id="KW-0418">Kinase</keyword>
<keyword id="KW-0547">Nucleotide-binding</keyword>
<keyword id="KW-0602">Photosynthesis</keyword>
<keyword id="KW-0934">Plastid</keyword>
<keyword id="KW-1185">Reference proteome</keyword>
<keyword id="KW-0808">Transferase</keyword>
<keyword id="KW-0809">Transit peptide</keyword>
<proteinExistence type="evidence at transcript level"/>
<reference key="1">
    <citation type="journal article" date="1989" name="Mol. Gen. Genet.">
        <title>Complete coding sequence of wheat phosphoribulokinase: developmental and light-dependent expression of the mRNA.</title>
        <authorList>
            <person name="Raines C.A."/>
            <person name="Longstaff M."/>
            <person name="Lloyd J.C."/>
            <person name="Dyer T.A."/>
        </authorList>
    </citation>
    <scope>NUCLEOTIDE SEQUENCE</scope>
</reference>
<reference key="2">
    <citation type="journal article" date="1991" name="Plant Mol. Biol.">
        <title>Structure and sequence of a wheat phosphoribulokinase gene.</title>
        <authorList>
            <person name="Lloyd J.C."/>
            <person name="Horsnell P.H."/>
            <person name="Dyer T.A."/>
            <person name="Raines C.A."/>
        </authorList>
    </citation>
    <scope>NUCLEOTIDE SEQUENCE [GENOMIC DNA]</scope>
    <source>
        <strain>cv. Chinese Spring</strain>
        <tissue>Etiolated shoot</tissue>
    </source>
</reference>
<sequence length="404" mass="45141">MAFCSPHTTTSLRSPCTTIPNSGFRQNQVIFFTTRSSRRSNTRHGARTFQVSCAVEQPIVIGLAADSGCGKSTFMRRLTSVFGGAAEPPKGGNPDSNTLISDTTTVICLDDYHSLDRTGRKEKGVTALDPKANDFDLMYEQVKAIKEGKAIEKPIYNHVTGLLDPAELIQPPKIFVIEGLHPMYDERVRELLDFSIYLDISNEVKFAWKIQRDMAERGHSLESIKASIEARKPDFDAFIDPQKQYADAVIEVLPTQLIPDDNEGKVLRVKLIMKEGIKFFNPVYLFDEGSTINWIPCGRKLTCSYPGIKFSYGPDTYFGQEVSVLEMDGQFDRLDELIYVESHLSNLSTKFYGEVTQQMLKHADFPGSNNGTGLFQTIVGLKIRDLYEQIIAERAGVPAEAAKV</sequence>
<comment type="catalytic activity">
    <reaction>
        <text>D-ribulose 5-phosphate + ATP = D-ribulose 1,5-bisphosphate + ADP + H(+)</text>
        <dbReference type="Rhea" id="RHEA:19365"/>
        <dbReference type="ChEBI" id="CHEBI:15378"/>
        <dbReference type="ChEBI" id="CHEBI:30616"/>
        <dbReference type="ChEBI" id="CHEBI:57870"/>
        <dbReference type="ChEBI" id="CHEBI:58121"/>
        <dbReference type="ChEBI" id="CHEBI:456216"/>
        <dbReference type="EC" id="2.7.1.19"/>
    </reaction>
</comment>
<comment type="activity regulation">
    <text>Light regulated via thioredoxin by reversible oxidation/reduction of sulfhydryl/disulfide groups.</text>
</comment>
<comment type="pathway">
    <text>Carbohydrate biosynthesis; Calvin cycle.</text>
</comment>
<comment type="subcellular location">
    <subcellularLocation>
        <location>Plastid</location>
        <location>Chloroplast</location>
    </subcellularLocation>
</comment>
<comment type="similarity">
    <text evidence="2">Belongs to the phosphoribulokinase family.</text>
</comment>
<organism>
    <name type="scientific">Triticum aestivum</name>
    <name type="common">Wheat</name>
    <dbReference type="NCBI Taxonomy" id="4565"/>
    <lineage>
        <taxon>Eukaryota</taxon>
        <taxon>Viridiplantae</taxon>
        <taxon>Streptophyta</taxon>
        <taxon>Embryophyta</taxon>
        <taxon>Tracheophyta</taxon>
        <taxon>Spermatophyta</taxon>
        <taxon>Magnoliopsida</taxon>
        <taxon>Liliopsida</taxon>
        <taxon>Poales</taxon>
        <taxon>Poaceae</taxon>
        <taxon>BOP clade</taxon>
        <taxon>Pooideae</taxon>
        <taxon>Triticodae</taxon>
        <taxon>Triticeae</taxon>
        <taxon>Triticinae</taxon>
        <taxon>Triticum</taxon>
    </lineage>
</organism>
<evidence type="ECO:0000250" key="1"/>
<evidence type="ECO:0000305" key="2"/>
<feature type="transit peptide" description="Chloroplast" evidence="1">
    <location>
        <begin position="1"/>
        <end position="53"/>
    </location>
</feature>
<feature type="chain" id="PRO_0000025755" description="Phosphoribulokinase, chloroplastic">
    <location>
        <begin position="54"/>
        <end position="404"/>
    </location>
</feature>
<feature type="disulfide bond" evidence="1">
    <location>
        <begin position="69"/>
        <end position="108"/>
    </location>
</feature>
<feature type="sequence conflict" description="In Ref. 2; CAA41020." evidence="2" ref="2">
    <original>T</original>
    <variation>S</variation>
    <location>
        <position position="8"/>
    </location>
</feature>
<feature type="sequence conflict" description="In Ref. 2; CAA41020." evidence="2" ref="2">
    <original>F</original>
    <variation>L</variation>
    <location>
        <position position="31"/>
    </location>
</feature>
<feature type="sequence conflict" description="In Ref. 2; CAA41020." evidence="2" ref="2">
    <original>D</original>
    <variation>G</variation>
    <location>
        <position position="240"/>
    </location>
</feature>
<accession>P26302</accession>